<gene>
    <name evidence="1" type="primary">dnaA</name>
    <name type="ordered locus">Nham_0001</name>
</gene>
<reference key="1">
    <citation type="submission" date="2006-03" db="EMBL/GenBank/DDBJ databases">
        <title>Complete sequence of chromosome of Nitrobacter hamburgensis X14.</title>
        <authorList>
            <consortium name="US DOE Joint Genome Institute"/>
            <person name="Copeland A."/>
            <person name="Lucas S."/>
            <person name="Lapidus A."/>
            <person name="Barry K."/>
            <person name="Detter J.C."/>
            <person name="Glavina del Rio T."/>
            <person name="Hammon N."/>
            <person name="Israni S."/>
            <person name="Dalin E."/>
            <person name="Tice H."/>
            <person name="Pitluck S."/>
            <person name="Chain P."/>
            <person name="Malfatti S."/>
            <person name="Shin M."/>
            <person name="Vergez L."/>
            <person name="Schmutz J."/>
            <person name="Larimer F."/>
            <person name="Land M."/>
            <person name="Hauser L."/>
            <person name="Kyrpides N."/>
            <person name="Ivanova N."/>
            <person name="Ward B."/>
            <person name="Arp D."/>
            <person name="Klotz M."/>
            <person name="Stein L."/>
            <person name="O'Mullan G."/>
            <person name="Starkenburg S."/>
            <person name="Sayavedra L."/>
            <person name="Poret-Peterson A.T."/>
            <person name="Gentry M.E."/>
            <person name="Bruce D."/>
            <person name="Richardson P."/>
        </authorList>
    </citation>
    <scope>NUCLEOTIDE SEQUENCE [LARGE SCALE GENOMIC DNA]</scope>
    <source>
        <strain>DSM 10229 / NCIMB 13809 / X14</strain>
    </source>
</reference>
<comment type="function">
    <text evidence="1">Plays an essential role in the initiation and regulation of chromosomal replication. ATP-DnaA binds to the origin of replication (oriC) to initiate formation of the DNA replication initiation complex once per cell cycle. Binds the DnaA box (a 9 base pair repeat at the origin) and separates the double-stranded (ds)DNA. Forms a right-handed helical filament on oriC DNA; dsDNA binds to the exterior of the filament while single-stranded (ss)DNA is stabiized in the filament's interior. The ATP-DnaA-oriC complex binds and stabilizes one strand of the AT-rich DNA unwinding element (DUE), permitting loading of DNA polymerase. After initiation quickly degrades to an ADP-DnaA complex that is not apt for DNA replication. Binds acidic phospholipids.</text>
</comment>
<comment type="subunit">
    <text evidence="1">Oligomerizes as a right-handed, spiral filament on DNA at oriC.</text>
</comment>
<comment type="subcellular location">
    <subcellularLocation>
        <location evidence="1">Cytoplasm</location>
    </subcellularLocation>
</comment>
<comment type="domain">
    <text evidence="1">Domain I is involved in oligomerization and binding regulators, domain II is flexibile and of varying length in different bacteria, domain III forms the AAA+ region, while domain IV binds dsDNA.</text>
</comment>
<comment type="similarity">
    <text evidence="1">Belongs to the DnaA family.</text>
</comment>
<evidence type="ECO:0000255" key="1">
    <source>
        <dbReference type="HAMAP-Rule" id="MF_00377"/>
    </source>
</evidence>
<name>DNAA_NITHX</name>
<protein>
    <recommendedName>
        <fullName evidence="1">Chromosomal replication initiator protein DnaA</fullName>
    </recommendedName>
</protein>
<organism>
    <name type="scientific">Nitrobacter hamburgensis (strain DSM 10229 / NCIMB 13809 / X14)</name>
    <dbReference type="NCBI Taxonomy" id="323097"/>
    <lineage>
        <taxon>Bacteria</taxon>
        <taxon>Pseudomonadati</taxon>
        <taxon>Pseudomonadota</taxon>
        <taxon>Alphaproteobacteria</taxon>
        <taxon>Hyphomicrobiales</taxon>
        <taxon>Nitrobacteraceae</taxon>
        <taxon>Nitrobacter</taxon>
    </lineage>
</organism>
<feature type="chain" id="PRO_1000048679" description="Chromosomal replication initiator protein DnaA">
    <location>
        <begin position="1"/>
        <end position="475"/>
    </location>
</feature>
<feature type="region of interest" description="Domain I, interacts with DnaA modulators" evidence="1">
    <location>
        <begin position="1"/>
        <end position="73"/>
    </location>
</feature>
<feature type="region of interest" description="Domain II" evidence="1">
    <location>
        <begin position="73"/>
        <end position="131"/>
    </location>
</feature>
<feature type="region of interest" description="Domain III, AAA+ region" evidence="1">
    <location>
        <begin position="132"/>
        <end position="354"/>
    </location>
</feature>
<feature type="region of interest" description="Domain IV, binds dsDNA" evidence="1">
    <location>
        <begin position="355"/>
        <end position="475"/>
    </location>
</feature>
<feature type="binding site" evidence="1">
    <location>
        <position position="179"/>
    </location>
    <ligand>
        <name>ATP</name>
        <dbReference type="ChEBI" id="CHEBI:30616"/>
    </ligand>
</feature>
<feature type="binding site" evidence="1">
    <location>
        <position position="181"/>
    </location>
    <ligand>
        <name>ATP</name>
        <dbReference type="ChEBI" id="CHEBI:30616"/>
    </ligand>
</feature>
<feature type="binding site" evidence="1">
    <location>
        <position position="182"/>
    </location>
    <ligand>
        <name>ATP</name>
        <dbReference type="ChEBI" id="CHEBI:30616"/>
    </ligand>
</feature>
<feature type="binding site" evidence="1">
    <location>
        <position position="183"/>
    </location>
    <ligand>
        <name>ATP</name>
        <dbReference type="ChEBI" id="CHEBI:30616"/>
    </ligand>
</feature>
<dbReference type="EMBL" id="CP000319">
    <property type="protein sequence ID" value="ABE60903.1"/>
    <property type="molecule type" value="Genomic_DNA"/>
</dbReference>
<dbReference type="RefSeq" id="WP_011508610.1">
    <property type="nucleotide sequence ID" value="NC_007964.1"/>
</dbReference>
<dbReference type="SMR" id="Q1QS94"/>
<dbReference type="STRING" id="323097.Nham_0001"/>
<dbReference type="KEGG" id="nha:Nham_0001"/>
<dbReference type="eggNOG" id="COG0593">
    <property type="taxonomic scope" value="Bacteria"/>
</dbReference>
<dbReference type="HOGENOM" id="CLU_026910_3_0_5"/>
<dbReference type="OrthoDB" id="9807019at2"/>
<dbReference type="Proteomes" id="UP000001953">
    <property type="component" value="Chromosome"/>
</dbReference>
<dbReference type="GO" id="GO:0005737">
    <property type="term" value="C:cytoplasm"/>
    <property type="evidence" value="ECO:0007669"/>
    <property type="project" value="UniProtKB-SubCell"/>
</dbReference>
<dbReference type="GO" id="GO:0005886">
    <property type="term" value="C:plasma membrane"/>
    <property type="evidence" value="ECO:0007669"/>
    <property type="project" value="TreeGrafter"/>
</dbReference>
<dbReference type="GO" id="GO:0005524">
    <property type="term" value="F:ATP binding"/>
    <property type="evidence" value="ECO:0007669"/>
    <property type="project" value="UniProtKB-UniRule"/>
</dbReference>
<dbReference type="GO" id="GO:0016887">
    <property type="term" value="F:ATP hydrolysis activity"/>
    <property type="evidence" value="ECO:0007669"/>
    <property type="project" value="InterPro"/>
</dbReference>
<dbReference type="GO" id="GO:0003688">
    <property type="term" value="F:DNA replication origin binding"/>
    <property type="evidence" value="ECO:0007669"/>
    <property type="project" value="UniProtKB-UniRule"/>
</dbReference>
<dbReference type="GO" id="GO:0008289">
    <property type="term" value="F:lipid binding"/>
    <property type="evidence" value="ECO:0007669"/>
    <property type="project" value="UniProtKB-KW"/>
</dbReference>
<dbReference type="GO" id="GO:0006270">
    <property type="term" value="P:DNA replication initiation"/>
    <property type="evidence" value="ECO:0007669"/>
    <property type="project" value="UniProtKB-UniRule"/>
</dbReference>
<dbReference type="GO" id="GO:0006275">
    <property type="term" value="P:regulation of DNA replication"/>
    <property type="evidence" value="ECO:0007669"/>
    <property type="project" value="UniProtKB-UniRule"/>
</dbReference>
<dbReference type="CDD" id="cd00009">
    <property type="entry name" value="AAA"/>
    <property type="match status" value="1"/>
</dbReference>
<dbReference type="CDD" id="cd06571">
    <property type="entry name" value="Bac_DnaA_C"/>
    <property type="match status" value="1"/>
</dbReference>
<dbReference type="FunFam" id="1.10.1750.10:FF:000002">
    <property type="entry name" value="Chromosomal replication initiator protein DnaA"/>
    <property type="match status" value="1"/>
</dbReference>
<dbReference type="FunFam" id="3.40.50.300:FF:000668">
    <property type="entry name" value="Chromosomal replication initiator protein DnaA"/>
    <property type="match status" value="1"/>
</dbReference>
<dbReference type="Gene3D" id="1.10.1750.10">
    <property type="match status" value="1"/>
</dbReference>
<dbReference type="Gene3D" id="1.10.8.60">
    <property type="match status" value="1"/>
</dbReference>
<dbReference type="Gene3D" id="3.30.300.180">
    <property type="match status" value="1"/>
</dbReference>
<dbReference type="Gene3D" id="3.40.50.300">
    <property type="entry name" value="P-loop containing nucleotide triphosphate hydrolases"/>
    <property type="match status" value="1"/>
</dbReference>
<dbReference type="HAMAP" id="MF_00377">
    <property type="entry name" value="DnaA_bact"/>
    <property type="match status" value="1"/>
</dbReference>
<dbReference type="InterPro" id="IPR003593">
    <property type="entry name" value="AAA+_ATPase"/>
</dbReference>
<dbReference type="InterPro" id="IPR001957">
    <property type="entry name" value="Chromosome_initiator_DnaA"/>
</dbReference>
<dbReference type="InterPro" id="IPR020591">
    <property type="entry name" value="Chromosome_initiator_DnaA-like"/>
</dbReference>
<dbReference type="InterPro" id="IPR018312">
    <property type="entry name" value="Chromosome_initiator_DnaA_CS"/>
</dbReference>
<dbReference type="InterPro" id="IPR013159">
    <property type="entry name" value="DnaA_C"/>
</dbReference>
<dbReference type="InterPro" id="IPR013317">
    <property type="entry name" value="DnaA_dom"/>
</dbReference>
<dbReference type="InterPro" id="IPR024633">
    <property type="entry name" value="DnaA_N_dom"/>
</dbReference>
<dbReference type="InterPro" id="IPR038454">
    <property type="entry name" value="DnaA_N_sf"/>
</dbReference>
<dbReference type="InterPro" id="IPR027417">
    <property type="entry name" value="P-loop_NTPase"/>
</dbReference>
<dbReference type="InterPro" id="IPR010921">
    <property type="entry name" value="Trp_repressor/repl_initiator"/>
</dbReference>
<dbReference type="NCBIfam" id="TIGR00362">
    <property type="entry name" value="DnaA"/>
    <property type="match status" value="1"/>
</dbReference>
<dbReference type="PANTHER" id="PTHR30050">
    <property type="entry name" value="CHROMOSOMAL REPLICATION INITIATOR PROTEIN DNAA"/>
    <property type="match status" value="1"/>
</dbReference>
<dbReference type="PANTHER" id="PTHR30050:SF2">
    <property type="entry name" value="CHROMOSOMAL REPLICATION INITIATOR PROTEIN DNAA"/>
    <property type="match status" value="1"/>
</dbReference>
<dbReference type="Pfam" id="PF00308">
    <property type="entry name" value="Bac_DnaA"/>
    <property type="match status" value="1"/>
</dbReference>
<dbReference type="Pfam" id="PF08299">
    <property type="entry name" value="Bac_DnaA_C"/>
    <property type="match status" value="1"/>
</dbReference>
<dbReference type="Pfam" id="PF11638">
    <property type="entry name" value="DnaA_N"/>
    <property type="match status" value="1"/>
</dbReference>
<dbReference type="PRINTS" id="PR00051">
    <property type="entry name" value="DNAA"/>
</dbReference>
<dbReference type="SMART" id="SM00382">
    <property type="entry name" value="AAA"/>
    <property type="match status" value="1"/>
</dbReference>
<dbReference type="SMART" id="SM00760">
    <property type="entry name" value="Bac_DnaA_C"/>
    <property type="match status" value="1"/>
</dbReference>
<dbReference type="SUPFAM" id="SSF52540">
    <property type="entry name" value="P-loop containing nucleoside triphosphate hydrolases"/>
    <property type="match status" value="1"/>
</dbReference>
<dbReference type="SUPFAM" id="SSF48295">
    <property type="entry name" value="TrpR-like"/>
    <property type="match status" value="1"/>
</dbReference>
<dbReference type="PROSITE" id="PS01008">
    <property type="entry name" value="DNAA"/>
    <property type="match status" value="1"/>
</dbReference>
<sequence length="475" mass="52756">MSDIEQERWSRVKGRLRSTVGEDIYSSWFARMDLESVHGESVRMSVPTRFLKSWIQAHYAERVLACWQAELPDVHRIDLMVRSAMRCAAPAKEAPAADPRRPEHGDGRASTELKMVATAPASANHDALGGSPLDPRLTFASFVTGRSNTLAHAAARQVAEGRRGDSIMFNPLYIHAGVGLGKTHLLQAVTWAGNAGTERKVLYLTAEKFMYGFVAALKSQTALAFKEALRGIDVLVIDDLQFLQGKSTQAEFCHTLNALIDAGRQVVVAADRPPSDLESLDDRVRSRLAGGLVVEMGSLGEELRLGILKSRIEVARAHHASFSVPEPVLDYLAKAITHNGRDLEGAINRLLAHSKLNAQPVTLEMAEREVRDLIRPQEPRRIKIEDIQRVVARQYNVSRSDLLSSRRTANVVRPRQVAMYLAKTLTLRSLPEIGRRFGGRDHTTVLHAVRKIEALVSKDTTLSDEVELLKRQLQE</sequence>
<accession>Q1QS94</accession>
<keyword id="KW-0067">ATP-binding</keyword>
<keyword id="KW-0963">Cytoplasm</keyword>
<keyword id="KW-0235">DNA replication</keyword>
<keyword id="KW-0238">DNA-binding</keyword>
<keyword id="KW-0446">Lipid-binding</keyword>
<keyword id="KW-0547">Nucleotide-binding</keyword>
<keyword id="KW-1185">Reference proteome</keyword>
<proteinExistence type="inferred from homology"/>